<organism>
    <name type="scientific">Desulfosudis oleivorans (strain DSM 6200 / JCM 39069 / Hxd3)</name>
    <name type="common">Desulfococcus oleovorans</name>
    <dbReference type="NCBI Taxonomy" id="96561"/>
    <lineage>
        <taxon>Bacteria</taxon>
        <taxon>Pseudomonadati</taxon>
        <taxon>Thermodesulfobacteriota</taxon>
        <taxon>Desulfobacteria</taxon>
        <taxon>Desulfobacterales</taxon>
        <taxon>Desulfosudaceae</taxon>
        <taxon>Desulfosudis</taxon>
    </lineage>
</organism>
<proteinExistence type="inferred from homology"/>
<comment type="function">
    <text evidence="1">Involved in peptide bond synthesis. Stimulates efficient translation and peptide-bond synthesis on native or reconstituted 70S ribosomes in vitro. Probably functions indirectly by altering the affinity of the ribosome for aminoacyl-tRNA, thus increasing their reactivity as acceptors for peptidyl transferase.</text>
</comment>
<comment type="pathway">
    <text evidence="1">Protein biosynthesis; polypeptide chain elongation.</text>
</comment>
<comment type="subcellular location">
    <subcellularLocation>
        <location evidence="1">Cytoplasm</location>
    </subcellularLocation>
</comment>
<comment type="similarity">
    <text evidence="1">Belongs to the elongation factor P family.</text>
</comment>
<reference key="1">
    <citation type="submission" date="2007-10" db="EMBL/GenBank/DDBJ databases">
        <title>Complete sequence of Desulfococcus oleovorans Hxd3.</title>
        <authorList>
            <consortium name="US DOE Joint Genome Institute"/>
            <person name="Copeland A."/>
            <person name="Lucas S."/>
            <person name="Lapidus A."/>
            <person name="Barry K."/>
            <person name="Glavina del Rio T."/>
            <person name="Dalin E."/>
            <person name="Tice H."/>
            <person name="Pitluck S."/>
            <person name="Kiss H."/>
            <person name="Brettin T."/>
            <person name="Bruce D."/>
            <person name="Detter J.C."/>
            <person name="Han C."/>
            <person name="Schmutz J."/>
            <person name="Larimer F."/>
            <person name="Land M."/>
            <person name="Hauser L."/>
            <person name="Kyrpides N."/>
            <person name="Kim E."/>
            <person name="Wawrik B."/>
            <person name="Richardson P."/>
        </authorList>
    </citation>
    <scope>NUCLEOTIDE SEQUENCE [LARGE SCALE GENOMIC DNA]</scope>
    <source>
        <strain>DSM 6200 / JCM 39069 / Hxd3</strain>
    </source>
</reference>
<dbReference type="EMBL" id="CP000859">
    <property type="protein sequence ID" value="ABW68162.1"/>
    <property type="molecule type" value="Genomic_DNA"/>
</dbReference>
<dbReference type="RefSeq" id="WP_012175774.1">
    <property type="nucleotide sequence ID" value="NC_009943.1"/>
</dbReference>
<dbReference type="SMR" id="A8ZVH5"/>
<dbReference type="STRING" id="96561.Dole_2358"/>
<dbReference type="KEGG" id="dol:Dole_2358"/>
<dbReference type="eggNOG" id="COG0231">
    <property type="taxonomic scope" value="Bacteria"/>
</dbReference>
<dbReference type="HOGENOM" id="CLU_074944_0_1_7"/>
<dbReference type="OrthoDB" id="9801844at2"/>
<dbReference type="UniPathway" id="UPA00345"/>
<dbReference type="Proteomes" id="UP000008561">
    <property type="component" value="Chromosome"/>
</dbReference>
<dbReference type="GO" id="GO:0005737">
    <property type="term" value="C:cytoplasm"/>
    <property type="evidence" value="ECO:0007669"/>
    <property type="project" value="UniProtKB-SubCell"/>
</dbReference>
<dbReference type="GO" id="GO:0003746">
    <property type="term" value="F:translation elongation factor activity"/>
    <property type="evidence" value="ECO:0007669"/>
    <property type="project" value="UniProtKB-UniRule"/>
</dbReference>
<dbReference type="GO" id="GO:0043043">
    <property type="term" value="P:peptide biosynthetic process"/>
    <property type="evidence" value="ECO:0007669"/>
    <property type="project" value="InterPro"/>
</dbReference>
<dbReference type="CDD" id="cd04470">
    <property type="entry name" value="S1_EF-P_repeat_1"/>
    <property type="match status" value="1"/>
</dbReference>
<dbReference type="CDD" id="cd05794">
    <property type="entry name" value="S1_EF-P_repeat_2"/>
    <property type="match status" value="1"/>
</dbReference>
<dbReference type="FunFam" id="2.30.30.30:FF:000003">
    <property type="entry name" value="Elongation factor P"/>
    <property type="match status" value="1"/>
</dbReference>
<dbReference type="FunFam" id="2.40.50.140:FF:000004">
    <property type="entry name" value="Elongation factor P"/>
    <property type="match status" value="1"/>
</dbReference>
<dbReference type="FunFam" id="2.40.50.140:FF:000009">
    <property type="entry name" value="Elongation factor P"/>
    <property type="match status" value="1"/>
</dbReference>
<dbReference type="Gene3D" id="2.30.30.30">
    <property type="match status" value="1"/>
</dbReference>
<dbReference type="Gene3D" id="2.40.50.140">
    <property type="entry name" value="Nucleic acid-binding proteins"/>
    <property type="match status" value="2"/>
</dbReference>
<dbReference type="HAMAP" id="MF_00141">
    <property type="entry name" value="EF_P"/>
    <property type="match status" value="1"/>
</dbReference>
<dbReference type="InterPro" id="IPR015365">
    <property type="entry name" value="Elong-fact-P_C"/>
</dbReference>
<dbReference type="InterPro" id="IPR012340">
    <property type="entry name" value="NA-bd_OB-fold"/>
</dbReference>
<dbReference type="InterPro" id="IPR014722">
    <property type="entry name" value="Rib_uL2_dom2"/>
</dbReference>
<dbReference type="InterPro" id="IPR020599">
    <property type="entry name" value="Transl_elong_fac_P/YeiP"/>
</dbReference>
<dbReference type="InterPro" id="IPR013185">
    <property type="entry name" value="Transl_elong_KOW-like"/>
</dbReference>
<dbReference type="InterPro" id="IPR001059">
    <property type="entry name" value="Transl_elong_P/YeiP_cen"/>
</dbReference>
<dbReference type="InterPro" id="IPR013852">
    <property type="entry name" value="Transl_elong_P/YeiP_CS"/>
</dbReference>
<dbReference type="InterPro" id="IPR011768">
    <property type="entry name" value="Transl_elongation_fac_P"/>
</dbReference>
<dbReference type="InterPro" id="IPR008991">
    <property type="entry name" value="Translation_prot_SH3-like_sf"/>
</dbReference>
<dbReference type="NCBIfam" id="TIGR00038">
    <property type="entry name" value="efp"/>
    <property type="match status" value="1"/>
</dbReference>
<dbReference type="NCBIfam" id="NF001810">
    <property type="entry name" value="PRK00529.1"/>
    <property type="match status" value="1"/>
</dbReference>
<dbReference type="PANTHER" id="PTHR30053">
    <property type="entry name" value="ELONGATION FACTOR P"/>
    <property type="match status" value="1"/>
</dbReference>
<dbReference type="PANTHER" id="PTHR30053:SF12">
    <property type="entry name" value="ELONGATION FACTOR P (EF-P) FAMILY PROTEIN"/>
    <property type="match status" value="1"/>
</dbReference>
<dbReference type="Pfam" id="PF01132">
    <property type="entry name" value="EFP"/>
    <property type="match status" value="1"/>
</dbReference>
<dbReference type="Pfam" id="PF08207">
    <property type="entry name" value="EFP_N"/>
    <property type="match status" value="1"/>
</dbReference>
<dbReference type="Pfam" id="PF09285">
    <property type="entry name" value="Elong-fact-P_C"/>
    <property type="match status" value="1"/>
</dbReference>
<dbReference type="PIRSF" id="PIRSF005901">
    <property type="entry name" value="EF-P"/>
    <property type="match status" value="1"/>
</dbReference>
<dbReference type="SMART" id="SM01185">
    <property type="entry name" value="EFP"/>
    <property type="match status" value="1"/>
</dbReference>
<dbReference type="SMART" id="SM00841">
    <property type="entry name" value="Elong-fact-P_C"/>
    <property type="match status" value="1"/>
</dbReference>
<dbReference type="SUPFAM" id="SSF50249">
    <property type="entry name" value="Nucleic acid-binding proteins"/>
    <property type="match status" value="2"/>
</dbReference>
<dbReference type="SUPFAM" id="SSF50104">
    <property type="entry name" value="Translation proteins SH3-like domain"/>
    <property type="match status" value="1"/>
</dbReference>
<dbReference type="PROSITE" id="PS01275">
    <property type="entry name" value="EFP"/>
    <property type="match status" value="1"/>
</dbReference>
<keyword id="KW-0963">Cytoplasm</keyword>
<keyword id="KW-0251">Elongation factor</keyword>
<keyword id="KW-0648">Protein biosynthesis</keyword>
<keyword id="KW-1185">Reference proteome</keyword>
<protein>
    <recommendedName>
        <fullName evidence="1">Elongation factor P</fullName>
        <shortName evidence="1">EF-P</shortName>
    </recommendedName>
</protein>
<feature type="chain" id="PRO_1000096148" description="Elongation factor P">
    <location>
        <begin position="1"/>
        <end position="187"/>
    </location>
</feature>
<evidence type="ECO:0000255" key="1">
    <source>
        <dbReference type="HAMAP-Rule" id="MF_00141"/>
    </source>
</evidence>
<sequence>MYEAGELRKGLKVEIDGDPYVIMEFEFVKPGKGQALYKCKLKNMLTGSQYDHTYRSGDKVGRANLEERKMEYLYFDGENYCFMDCTTYDQIFVPPSQVAEVLDLLKENTVCDVLFFDNRAIGVTLPNFVELAITEADPWVKGDTASGSNKPVTVETGCVLQVPPFIEVGEVIKIDTRTKNYVERVKK</sequence>
<gene>
    <name evidence="1" type="primary">efp</name>
    <name type="ordered locus">Dole_2358</name>
</gene>
<name>EFP_DESOH</name>
<accession>A8ZVH5</accession>